<protein>
    <recommendedName>
        <fullName evidence="1">Bifunctional protein GlmU</fullName>
    </recommendedName>
    <domain>
        <recommendedName>
            <fullName evidence="1">UDP-N-acetylglucosamine pyrophosphorylase</fullName>
            <ecNumber evidence="1">2.7.7.23</ecNumber>
        </recommendedName>
        <alternativeName>
            <fullName evidence="1">N-acetylglucosamine-1-phosphate uridyltransferase</fullName>
        </alternativeName>
    </domain>
    <domain>
        <recommendedName>
            <fullName evidence="1">Glucosamine-1-phosphate N-acetyltransferase</fullName>
            <ecNumber evidence="1">2.3.1.157</ecNumber>
        </recommendedName>
    </domain>
</protein>
<feature type="chain" id="PRO_1000186444" description="Bifunctional protein GlmU">
    <location>
        <begin position="1"/>
        <end position="456"/>
    </location>
</feature>
<feature type="region of interest" description="Pyrophosphorylase" evidence="1">
    <location>
        <begin position="1"/>
        <end position="229"/>
    </location>
</feature>
<feature type="region of interest" description="Linker" evidence="1">
    <location>
        <begin position="230"/>
        <end position="250"/>
    </location>
</feature>
<feature type="region of interest" description="N-acetyltransferase" evidence="1">
    <location>
        <begin position="251"/>
        <end position="456"/>
    </location>
</feature>
<feature type="active site" description="Proton acceptor" evidence="1">
    <location>
        <position position="363"/>
    </location>
</feature>
<feature type="binding site" evidence="1">
    <location>
        <begin position="11"/>
        <end position="14"/>
    </location>
    <ligand>
        <name>UDP-N-acetyl-alpha-D-glucosamine</name>
        <dbReference type="ChEBI" id="CHEBI:57705"/>
    </ligand>
</feature>
<feature type="binding site" evidence="1">
    <location>
        <position position="25"/>
    </location>
    <ligand>
        <name>UDP-N-acetyl-alpha-D-glucosamine</name>
        <dbReference type="ChEBI" id="CHEBI:57705"/>
    </ligand>
</feature>
<feature type="binding site" evidence="1">
    <location>
        <position position="76"/>
    </location>
    <ligand>
        <name>UDP-N-acetyl-alpha-D-glucosamine</name>
        <dbReference type="ChEBI" id="CHEBI:57705"/>
    </ligand>
</feature>
<feature type="binding site" evidence="1">
    <location>
        <begin position="81"/>
        <end position="82"/>
    </location>
    <ligand>
        <name>UDP-N-acetyl-alpha-D-glucosamine</name>
        <dbReference type="ChEBI" id="CHEBI:57705"/>
    </ligand>
</feature>
<feature type="binding site" evidence="1">
    <location>
        <begin position="103"/>
        <end position="105"/>
    </location>
    <ligand>
        <name>UDP-N-acetyl-alpha-D-glucosamine</name>
        <dbReference type="ChEBI" id="CHEBI:57705"/>
    </ligand>
</feature>
<feature type="binding site" evidence="1">
    <location>
        <position position="105"/>
    </location>
    <ligand>
        <name>Mg(2+)</name>
        <dbReference type="ChEBI" id="CHEBI:18420"/>
    </ligand>
</feature>
<feature type="binding site" evidence="1">
    <location>
        <position position="140"/>
    </location>
    <ligand>
        <name>UDP-N-acetyl-alpha-D-glucosamine</name>
        <dbReference type="ChEBI" id="CHEBI:57705"/>
    </ligand>
</feature>
<feature type="binding site" evidence="1">
    <location>
        <position position="154"/>
    </location>
    <ligand>
        <name>UDP-N-acetyl-alpha-D-glucosamine</name>
        <dbReference type="ChEBI" id="CHEBI:57705"/>
    </ligand>
</feature>
<feature type="binding site" evidence="1">
    <location>
        <position position="169"/>
    </location>
    <ligand>
        <name>UDP-N-acetyl-alpha-D-glucosamine</name>
        <dbReference type="ChEBI" id="CHEBI:57705"/>
    </ligand>
</feature>
<feature type="binding site" evidence="1">
    <location>
        <position position="227"/>
    </location>
    <ligand>
        <name>Mg(2+)</name>
        <dbReference type="ChEBI" id="CHEBI:18420"/>
    </ligand>
</feature>
<feature type="binding site" evidence="1">
    <location>
        <position position="227"/>
    </location>
    <ligand>
        <name>UDP-N-acetyl-alpha-D-glucosamine</name>
        <dbReference type="ChEBI" id="CHEBI:57705"/>
    </ligand>
</feature>
<feature type="binding site" evidence="1">
    <location>
        <position position="333"/>
    </location>
    <ligand>
        <name>UDP-N-acetyl-alpha-D-glucosamine</name>
        <dbReference type="ChEBI" id="CHEBI:57705"/>
    </ligand>
</feature>
<feature type="binding site" evidence="1">
    <location>
        <position position="351"/>
    </location>
    <ligand>
        <name>UDP-N-acetyl-alpha-D-glucosamine</name>
        <dbReference type="ChEBI" id="CHEBI:57705"/>
    </ligand>
</feature>
<feature type="binding site" evidence="1">
    <location>
        <position position="366"/>
    </location>
    <ligand>
        <name>UDP-N-acetyl-alpha-D-glucosamine</name>
        <dbReference type="ChEBI" id="CHEBI:57705"/>
    </ligand>
</feature>
<feature type="binding site" evidence="1">
    <location>
        <position position="377"/>
    </location>
    <ligand>
        <name>UDP-N-acetyl-alpha-D-glucosamine</name>
        <dbReference type="ChEBI" id="CHEBI:57705"/>
    </ligand>
</feature>
<feature type="binding site" evidence="1">
    <location>
        <position position="380"/>
    </location>
    <ligand>
        <name>acetyl-CoA</name>
        <dbReference type="ChEBI" id="CHEBI:57288"/>
    </ligand>
</feature>
<feature type="binding site" evidence="1">
    <location>
        <begin position="386"/>
        <end position="387"/>
    </location>
    <ligand>
        <name>acetyl-CoA</name>
        <dbReference type="ChEBI" id="CHEBI:57288"/>
    </ligand>
</feature>
<feature type="binding site" evidence="1">
    <location>
        <position position="405"/>
    </location>
    <ligand>
        <name>acetyl-CoA</name>
        <dbReference type="ChEBI" id="CHEBI:57288"/>
    </ligand>
</feature>
<feature type="binding site" evidence="1">
    <location>
        <position position="423"/>
    </location>
    <ligand>
        <name>acetyl-CoA</name>
        <dbReference type="ChEBI" id="CHEBI:57288"/>
    </ligand>
</feature>
<feature type="binding site" evidence="1">
    <location>
        <position position="440"/>
    </location>
    <ligand>
        <name>acetyl-CoA</name>
        <dbReference type="ChEBI" id="CHEBI:57288"/>
    </ligand>
</feature>
<dbReference type="EC" id="2.7.7.23" evidence="1"/>
<dbReference type="EC" id="2.3.1.157" evidence="1"/>
<dbReference type="EMBL" id="CP001164">
    <property type="protein sequence ID" value="ACI37918.1"/>
    <property type="molecule type" value="Genomic_DNA"/>
</dbReference>
<dbReference type="RefSeq" id="WP_000933731.1">
    <property type="nucleotide sequence ID" value="NC_011353.1"/>
</dbReference>
<dbReference type="SMR" id="B5YXD4"/>
<dbReference type="KEGG" id="ecf:ECH74115_5166"/>
<dbReference type="HOGENOM" id="CLU_029499_15_2_6"/>
<dbReference type="UniPathway" id="UPA00113">
    <property type="reaction ID" value="UER00532"/>
</dbReference>
<dbReference type="UniPathway" id="UPA00113">
    <property type="reaction ID" value="UER00533"/>
</dbReference>
<dbReference type="UniPathway" id="UPA00973"/>
<dbReference type="GO" id="GO:0005737">
    <property type="term" value="C:cytoplasm"/>
    <property type="evidence" value="ECO:0007669"/>
    <property type="project" value="UniProtKB-SubCell"/>
</dbReference>
<dbReference type="GO" id="GO:0016020">
    <property type="term" value="C:membrane"/>
    <property type="evidence" value="ECO:0007669"/>
    <property type="project" value="GOC"/>
</dbReference>
<dbReference type="GO" id="GO:0019134">
    <property type="term" value="F:glucosamine-1-phosphate N-acetyltransferase activity"/>
    <property type="evidence" value="ECO:0007669"/>
    <property type="project" value="UniProtKB-UniRule"/>
</dbReference>
<dbReference type="GO" id="GO:0000287">
    <property type="term" value="F:magnesium ion binding"/>
    <property type="evidence" value="ECO:0007669"/>
    <property type="project" value="UniProtKB-UniRule"/>
</dbReference>
<dbReference type="GO" id="GO:0003977">
    <property type="term" value="F:UDP-N-acetylglucosamine diphosphorylase activity"/>
    <property type="evidence" value="ECO:0007669"/>
    <property type="project" value="UniProtKB-UniRule"/>
</dbReference>
<dbReference type="GO" id="GO:0000902">
    <property type="term" value="P:cell morphogenesis"/>
    <property type="evidence" value="ECO:0007669"/>
    <property type="project" value="UniProtKB-UniRule"/>
</dbReference>
<dbReference type="GO" id="GO:0071555">
    <property type="term" value="P:cell wall organization"/>
    <property type="evidence" value="ECO:0007669"/>
    <property type="project" value="UniProtKB-KW"/>
</dbReference>
<dbReference type="GO" id="GO:0009245">
    <property type="term" value="P:lipid A biosynthetic process"/>
    <property type="evidence" value="ECO:0007669"/>
    <property type="project" value="UniProtKB-UniRule"/>
</dbReference>
<dbReference type="GO" id="GO:0009252">
    <property type="term" value="P:peptidoglycan biosynthetic process"/>
    <property type="evidence" value="ECO:0007669"/>
    <property type="project" value="UniProtKB-UniRule"/>
</dbReference>
<dbReference type="GO" id="GO:0008360">
    <property type="term" value="P:regulation of cell shape"/>
    <property type="evidence" value="ECO:0007669"/>
    <property type="project" value="UniProtKB-KW"/>
</dbReference>
<dbReference type="GO" id="GO:0006048">
    <property type="term" value="P:UDP-N-acetylglucosamine biosynthetic process"/>
    <property type="evidence" value="ECO:0007669"/>
    <property type="project" value="UniProtKB-UniPathway"/>
</dbReference>
<dbReference type="CDD" id="cd02540">
    <property type="entry name" value="GT2_GlmU_N_bac"/>
    <property type="match status" value="1"/>
</dbReference>
<dbReference type="CDD" id="cd03353">
    <property type="entry name" value="LbH_GlmU_C"/>
    <property type="match status" value="1"/>
</dbReference>
<dbReference type="FunFam" id="2.160.10.10:FF:000011">
    <property type="entry name" value="Bifunctional protein GlmU"/>
    <property type="match status" value="1"/>
</dbReference>
<dbReference type="FunFam" id="3.90.550.10:FF:000006">
    <property type="entry name" value="Bifunctional protein GlmU"/>
    <property type="match status" value="1"/>
</dbReference>
<dbReference type="Gene3D" id="2.160.10.10">
    <property type="entry name" value="Hexapeptide repeat proteins"/>
    <property type="match status" value="1"/>
</dbReference>
<dbReference type="Gene3D" id="3.90.550.10">
    <property type="entry name" value="Spore Coat Polysaccharide Biosynthesis Protein SpsA, Chain A"/>
    <property type="match status" value="1"/>
</dbReference>
<dbReference type="HAMAP" id="MF_01631">
    <property type="entry name" value="GlmU"/>
    <property type="match status" value="1"/>
</dbReference>
<dbReference type="InterPro" id="IPR005882">
    <property type="entry name" value="Bifunctional_GlmU"/>
</dbReference>
<dbReference type="InterPro" id="IPR050065">
    <property type="entry name" value="GlmU-like"/>
</dbReference>
<dbReference type="InterPro" id="IPR038009">
    <property type="entry name" value="GlmU_C_LbH"/>
</dbReference>
<dbReference type="InterPro" id="IPR001451">
    <property type="entry name" value="Hexapep"/>
</dbReference>
<dbReference type="InterPro" id="IPR018357">
    <property type="entry name" value="Hexapep_transf_CS"/>
</dbReference>
<dbReference type="InterPro" id="IPR025877">
    <property type="entry name" value="MobA-like_NTP_Trfase"/>
</dbReference>
<dbReference type="InterPro" id="IPR029044">
    <property type="entry name" value="Nucleotide-diphossugar_trans"/>
</dbReference>
<dbReference type="InterPro" id="IPR011004">
    <property type="entry name" value="Trimer_LpxA-like_sf"/>
</dbReference>
<dbReference type="NCBIfam" id="TIGR01173">
    <property type="entry name" value="glmU"/>
    <property type="match status" value="1"/>
</dbReference>
<dbReference type="NCBIfam" id="NF006986">
    <property type="entry name" value="PRK09451.1"/>
    <property type="match status" value="1"/>
</dbReference>
<dbReference type="PANTHER" id="PTHR43584:SF3">
    <property type="entry name" value="BIFUNCTIONAL PROTEIN GLMU"/>
    <property type="match status" value="1"/>
</dbReference>
<dbReference type="PANTHER" id="PTHR43584">
    <property type="entry name" value="NUCLEOTIDYL TRANSFERASE"/>
    <property type="match status" value="1"/>
</dbReference>
<dbReference type="Pfam" id="PF00132">
    <property type="entry name" value="Hexapep"/>
    <property type="match status" value="2"/>
</dbReference>
<dbReference type="Pfam" id="PF12804">
    <property type="entry name" value="NTP_transf_3"/>
    <property type="match status" value="1"/>
</dbReference>
<dbReference type="SUPFAM" id="SSF53448">
    <property type="entry name" value="Nucleotide-diphospho-sugar transferases"/>
    <property type="match status" value="1"/>
</dbReference>
<dbReference type="SUPFAM" id="SSF51161">
    <property type="entry name" value="Trimeric LpxA-like enzymes"/>
    <property type="match status" value="1"/>
</dbReference>
<dbReference type="PROSITE" id="PS00101">
    <property type="entry name" value="HEXAPEP_TRANSFERASES"/>
    <property type="match status" value="1"/>
</dbReference>
<reference key="1">
    <citation type="journal article" date="2011" name="Proc. Natl. Acad. Sci. U.S.A.">
        <title>Genomic anatomy of Escherichia coli O157:H7 outbreaks.</title>
        <authorList>
            <person name="Eppinger M."/>
            <person name="Mammel M.K."/>
            <person name="Leclerc J.E."/>
            <person name="Ravel J."/>
            <person name="Cebula T.A."/>
        </authorList>
    </citation>
    <scope>NUCLEOTIDE SEQUENCE [LARGE SCALE GENOMIC DNA]</scope>
    <source>
        <strain>EC4115 / EHEC</strain>
    </source>
</reference>
<evidence type="ECO:0000255" key="1">
    <source>
        <dbReference type="HAMAP-Rule" id="MF_01631"/>
    </source>
</evidence>
<proteinExistence type="inferred from homology"/>
<keyword id="KW-0012">Acyltransferase</keyword>
<keyword id="KW-0133">Cell shape</keyword>
<keyword id="KW-0961">Cell wall biogenesis/degradation</keyword>
<keyword id="KW-0963">Cytoplasm</keyword>
<keyword id="KW-0460">Magnesium</keyword>
<keyword id="KW-0479">Metal-binding</keyword>
<keyword id="KW-0511">Multifunctional enzyme</keyword>
<keyword id="KW-0548">Nucleotidyltransferase</keyword>
<keyword id="KW-0573">Peptidoglycan synthesis</keyword>
<keyword id="KW-0677">Repeat</keyword>
<keyword id="KW-0808">Transferase</keyword>
<comment type="function">
    <text evidence="1">Catalyzes the last two sequential reactions in the de novo biosynthetic pathway for UDP-N-acetylglucosamine (UDP-GlcNAc). The C-terminal domain catalyzes the transfer of acetyl group from acetyl coenzyme A to glucosamine-1-phosphate (GlcN-1-P) to produce N-acetylglucosamine-1-phosphate (GlcNAc-1-P), which is converted into UDP-GlcNAc by the transfer of uridine 5-monophosphate (from uridine 5-triphosphate), a reaction catalyzed by the N-terminal domain.</text>
</comment>
<comment type="catalytic activity">
    <reaction evidence="1">
        <text>alpha-D-glucosamine 1-phosphate + acetyl-CoA = N-acetyl-alpha-D-glucosamine 1-phosphate + CoA + H(+)</text>
        <dbReference type="Rhea" id="RHEA:13725"/>
        <dbReference type="ChEBI" id="CHEBI:15378"/>
        <dbReference type="ChEBI" id="CHEBI:57287"/>
        <dbReference type="ChEBI" id="CHEBI:57288"/>
        <dbReference type="ChEBI" id="CHEBI:57776"/>
        <dbReference type="ChEBI" id="CHEBI:58516"/>
        <dbReference type="EC" id="2.3.1.157"/>
    </reaction>
</comment>
<comment type="catalytic activity">
    <reaction evidence="1">
        <text>N-acetyl-alpha-D-glucosamine 1-phosphate + UTP + H(+) = UDP-N-acetyl-alpha-D-glucosamine + diphosphate</text>
        <dbReference type="Rhea" id="RHEA:13509"/>
        <dbReference type="ChEBI" id="CHEBI:15378"/>
        <dbReference type="ChEBI" id="CHEBI:33019"/>
        <dbReference type="ChEBI" id="CHEBI:46398"/>
        <dbReference type="ChEBI" id="CHEBI:57705"/>
        <dbReference type="ChEBI" id="CHEBI:57776"/>
        <dbReference type="EC" id="2.7.7.23"/>
    </reaction>
</comment>
<comment type="cofactor">
    <cofactor evidence="1">
        <name>Mg(2+)</name>
        <dbReference type="ChEBI" id="CHEBI:18420"/>
    </cofactor>
    <text evidence="1">Binds 1 Mg(2+) ion per subunit.</text>
</comment>
<comment type="pathway">
    <text evidence="1">Nucleotide-sugar biosynthesis; UDP-N-acetyl-alpha-D-glucosamine biosynthesis; N-acetyl-alpha-D-glucosamine 1-phosphate from alpha-D-glucosamine 6-phosphate (route II): step 2/2.</text>
</comment>
<comment type="pathway">
    <text evidence="1">Nucleotide-sugar biosynthesis; UDP-N-acetyl-alpha-D-glucosamine biosynthesis; UDP-N-acetyl-alpha-D-glucosamine from N-acetyl-alpha-D-glucosamine 1-phosphate: step 1/1.</text>
</comment>
<comment type="pathway">
    <text evidence="1">Bacterial outer membrane biogenesis; LPS lipid A biosynthesis.</text>
</comment>
<comment type="subunit">
    <text evidence="1">Homotrimer.</text>
</comment>
<comment type="subcellular location">
    <subcellularLocation>
        <location evidence="1">Cytoplasm</location>
    </subcellularLocation>
</comment>
<comment type="similarity">
    <text evidence="1">In the N-terminal section; belongs to the N-acetylglucosamine-1-phosphate uridyltransferase family.</text>
</comment>
<comment type="similarity">
    <text evidence="1">In the C-terminal section; belongs to the transferase hexapeptide repeat family.</text>
</comment>
<name>GLMU_ECO5E</name>
<accession>B5YXD4</accession>
<gene>
    <name evidence="1" type="primary">glmU</name>
    <name type="ordered locus">ECH74115_5166</name>
</gene>
<sequence>MLNNAMSVVILAAGKGTRMYSDLPKVLHTLAGKAMVQHVIDAANELGAAHVHLVYGHGGDLLKQALKDDNLNWVLQAEQLGTGHAMQQAAPFFADDEDILMLYGDVPLISVETLQRLRDAKPQGGIGLLTVKLDDPTGYGRITRENGKVTGIVEHKDATDEQRQIQEINTGILIANGADMKRWLAKLTNNNAQGEYYITDIIALAYQEGREIVAVHPQRLSEVEGVNNRLQLSRLERVYQSEQAEKLLLAGVMLRDPARFDLRGTLTHGRDVEIDTNVIIEGNVTLGHRVKIGSGCVIKNSVIGDDCEISPYTVVEDANLAAACTIGPFARLRPGAELLEGAHVGNFVEMKKARLGKGSKAGHLTYLGDAEIGDNVNIGAGTITCNYDGANKFKTIIGDDVFVGSDTQLVAPVTVGKGATIAAGTTVTRNVGENALAISRVPQTQKEGWRRPVKKK</sequence>
<organism>
    <name type="scientific">Escherichia coli O157:H7 (strain EC4115 / EHEC)</name>
    <dbReference type="NCBI Taxonomy" id="444450"/>
    <lineage>
        <taxon>Bacteria</taxon>
        <taxon>Pseudomonadati</taxon>
        <taxon>Pseudomonadota</taxon>
        <taxon>Gammaproteobacteria</taxon>
        <taxon>Enterobacterales</taxon>
        <taxon>Enterobacteriaceae</taxon>
        <taxon>Escherichia</taxon>
    </lineage>
</organism>